<proteinExistence type="inferred from homology"/>
<feature type="chain" id="PRO_0000090260" description="Triosephosphate isomerase">
    <location>
        <begin position="1"/>
        <end position="252"/>
    </location>
</feature>
<feature type="active site" description="Electrophile" evidence="1">
    <location>
        <position position="96"/>
    </location>
</feature>
<feature type="active site" description="Proton acceptor" evidence="1">
    <location>
        <position position="168"/>
    </location>
</feature>
<feature type="binding site" evidence="1">
    <location>
        <begin position="10"/>
        <end position="12"/>
    </location>
    <ligand>
        <name>substrate</name>
    </ligand>
</feature>
<feature type="binding site" evidence="1">
    <location>
        <position position="174"/>
    </location>
    <ligand>
        <name>substrate</name>
    </ligand>
</feature>
<feature type="binding site" evidence="1">
    <location>
        <position position="213"/>
    </location>
    <ligand>
        <name>substrate</name>
    </ligand>
</feature>
<feature type="binding site" evidence="1">
    <location>
        <begin position="234"/>
        <end position="235"/>
    </location>
    <ligand>
        <name>substrate</name>
    </ligand>
</feature>
<evidence type="ECO:0000255" key="1">
    <source>
        <dbReference type="HAMAP-Rule" id="MF_00147"/>
    </source>
</evidence>
<comment type="function">
    <text evidence="1">Involved in the gluconeogenesis. Catalyzes stereospecifically the conversion of dihydroxyacetone phosphate (DHAP) to D-glyceraldehyde-3-phosphate (G3P).</text>
</comment>
<comment type="catalytic activity">
    <reaction evidence="1">
        <text>D-glyceraldehyde 3-phosphate = dihydroxyacetone phosphate</text>
        <dbReference type="Rhea" id="RHEA:18585"/>
        <dbReference type="ChEBI" id="CHEBI:57642"/>
        <dbReference type="ChEBI" id="CHEBI:59776"/>
        <dbReference type="EC" id="5.3.1.1"/>
    </reaction>
</comment>
<comment type="pathway">
    <text evidence="1">Carbohydrate biosynthesis; gluconeogenesis.</text>
</comment>
<comment type="pathway">
    <text evidence="1">Carbohydrate degradation; glycolysis; D-glyceraldehyde 3-phosphate from glycerone phosphate: step 1/1.</text>
</comment>
<comment type="subunit">
    <text evidence="1">Homodimer.</text>
</comment>
<comment type="subcellular location">
    <subcellularLocation>
        <location evidence="1">Cytoplasm</location>
    </subcellularLocation>
</comment>
<comment type="similarity">
    <text evidence="1">Belongs to the triosephosphate isomerase family.</text>
</comment>
<gene>
    <name evidence="1" type="primary">tpiA</name>
    <name type="ordered locus">NE1779</name>
</gene>
<reference key="1">
    <citation type="journal article" date="2003" name="J. Bacteriol.">
        <title>Complete genome sequence of the ammonia-oxidizing bacterium and obligate chemolithoautotroph Nitrosomonas europaea.</title>
        <authorList>
            <person name="Chain P."/>
            <person name="Lamerdin J.E."/>
            <person name="Larimer F.W."/>
            <person name="Regala W."/>
            <person name="Lao V."/>
            <person name="Land M.L."/>
            <person name="Hauser L."/>
            <person name="Hooper A.B."/>
            <person name="Klotz M.G."/>
            <person name="Norton J."/>
            <person name="Sayavedra-Soto L.A."/>
            <person name="Arciero D.M."/>
            <person name="Hommes N.G."/>
            <person name="Whittaker M.M."/>
            <person name="Arp D.J."/>
        </authorList>
    </citation>
    <scope>NUCLEOTIDE SEQUENCE [LARGE SCALE GENOMIC DNA]</scope>
    <source>
        <strain>ATCC 19718 / CIP 103999 / KCTC 2705 / NBRC 14298</strain>
    </source>
</reference>
<protein>
    <recommendedName>
        <fullName evidence="1">Triosephosphate isomerase</fullName>
        <shortName evidence="1">TIM</shortName>
        <shortName evidence="1">TPI</shortName>
        <ecNumber evidence="1">5.3.1.1</ecNumber>
    </recommendedName>
    <alternativeName>
        <fullName evidence="1">Triose-phosphate isomerase</fullName>
    </alternativeName>
</protein>
<keyword id="KW-0963">Cytoplasm</keyword>
<keyword id="KW-0312">Gluconeogenesis</keyword>
<keyword id="KW-0324">Glycolysis</keyword>
<keyword id="KW-0413">Isomerase</keyword>
<keyword id="KW-1185">Reference proteome</keyword>
<dbReference type="EC" id="5.3.1.1" evidence="1"/>
<dbReference type="EMBL" id="AL954747">
    <property type="protein sequence ID" value="CAD85690.1"/>
    <property type="molecule type" value="Genomic_DNA"/>
</dbReference>
<dbReference type="RefSeq" id="WP_011112330.1">
    <property type="nucleotide sequence ID" value="NC_004757.1"/>
</dbReference>
<dbReference type="SMR" id="Q82TU1"/>
<dbReference type="STRING" id="228410.NE1779"/>
<dbReference type="GeneID" id="87104941"/>
<dbReference type="KEGG" id="neu:NE1779"/>
<dbReference type="eggNOG" id="COG0149">
    <property type="taxonomic scope" value="Bacteria"/>
</dbReference>
<dbReference type="HOGENOM" id="CLU_024251_2_1_4"/>
<dbReference type="OrthoDB" id="9809429at2"/>
<dbReference type="PhylomeDB" id="Q82TU1"/>
<dbReference type="UniPathway" id="UPA00109">
    <property type="reaction ID" value="UER00189"/>
</dbReference>
<dbReference type="UniPathway" id="UPA00138"/>
<dbReference type="Proteomes" id="UP000001416">
    <property type="component" value="Chromosome"/>
</dbReference>
<dbReference type="GO" id="GO:0005829">
    <property type="term" value="C:cytosol"/>
    <property type="evidence" value="ECO:0007669"/>
    <property type="project" value="TreeGrafter"/>
</dbReference>
<dbReference type="GO" id="GO:0004807">
    <property type="term" value="F:triose-phosphate isomerase activity"/>
    <property type="evidence" value="ECO:0007669"/>
    <property type="project" value="UniProtKB-UniRule"/>
</dbReference>
<dbReference type="GO" id="GO:0006094">
    <property type="term" value="P:gluconeogenesis"/>
    <property type="evidence" value="ECO:0007669"/>
    <property type="project" value="UniProtKB-UniRule"/>
</dbReference>
<dbReference type="GO" id="GO:0046166">
    <property type="term" value="P:glyceraldehyde-3-phosphate biosynthetic process"/>
    <property type="evidence" value="ECO:0007669"/>
    <property type="project" value="TreeGrafter"/>
</dbReference>
<dbReference type="GO" id="GO:0019563">
    <property type="term" value="P:glycerol catabolic process"/>
    <property type="evidence" value="ECO:0007669"/>
    <property type="project" value="TreeGrafter"/>
</dbReference>
<dbReference type="GO" id="GO:0006096">
    <property type="term" value="P:glycolytic process"/>
    <property type="evidence" value="ECO:0007669"/>
    <property type="project" value="UniProtKB-UniRule"/>
</dbReference>
<dbReference type="CDD" id="cd00311">
    <property type="entry name" value="TIM"/>
    <property type="match status" value="1"/>
</dbReference>
<dbReference type="FunFam" id="3.20.20.70:FF:000016">
    <property type="entry name" value="Triosephosphate isomerase"/>
    <property type="match status" value="1"/>
</dbReference>
<dbReference type="Gene3D" id="3.20.20.70">
    <property type="entry name" value="Aldolase class I"/>
    <property type="match status" value="1"/>
</dbReference>
<dbReference type="HAMAP" id="MF_00147_B">
    <property type="entry name" value="TIM_B"/>
    <property type="match status" value="1"/>
</dbReference>
<dbReference type="InterPro" id="IPR013785">
    <property type="entry name" value="Aldolase_TIM"/>
</dbReference>
<dbReference type="InterPro" id="IPR035990">
    <property type="entry name" value="TIM_sf"/>
</dbReference>
<dbReference type="InterPro" id="IPR022896">
    <property type="entry name" value="TrioseP_Isoase_bac/euk"/>
</dbReference>
<dbReference type="InterPro" id="IPR000652">
    <property type="entry name" value="Triosephosphate_isomerase"/>
</dbReference>
<dbReference type="InterPro" id="IPR020861">
    <property type="entry name" value="Triosephosphate_isomerase_AS"/>
</dbReference>
<dbReference type="NCBIfam" id="TIGR00419">
    <property type="entry name" value="tim"/>
    <property type="match status" value="1"/>
</dbReference>
<dbReference type="PANTHER" id="PTHR21139">
    <property type="entry name" value="TRIOSEPHOSPHATE ISOMERASE"/>
    <property type="match status" value="1"/>
</dbReference>
<dbReference type="PANTHER" id="PTHR21139:SF42">
    <property type="entry name" value="TRIOSEPHOSPHATE ISOMERASE"/>
    <property type="match status" value="1"/>
</dbReference>
<dbReference type="Pfam" id="PF00121">
    <property type="entry name" value="TIM"/>
    <property type="match status" value="1"/>
</dbReference>
<dbReference type="SUPFAM" id="SSF51351">
    <property type="entry name" value="Triosephosphate isomerase (TIM)"/>
    <property type="match status" value="1"/>
</dbReference>
<dbReference type="PROSITE" id="PS00171">
    <property type="entry name" value="TIM_1"/>
    <property type="match status" value="1"/>
</dbReference>
<dbReference type="PROSITE" id="PS51440">
    <property type="entry name" value="TIM_2"/>
    <property type="match status" value="1"/>
</dbReference>
<name>TPIS_NITEU</name>
<sequence>MGRAGFVAGNWKMHGSLVRNQELLDAVVSGTRSLQNVSCVVCVPYPYIAQTQSVLEGSHVLWGGQNVSQYHHGAYTGEVSADMLADLGCRYVIVGHSERRTLFGEGNQVVAEKFRAAQERSITPILCVGETLAQRESDETEQVIAMQLDAVIDLAGIEALGQSVIAYEPVWAIGTGKTATPQQAQDVHKFIRSRIAVHSGGIAENIQILYGGSVKADNARELFTMPDIDGGLIGGASLVAAEFISICLAAQN</sequence>
<organism>
    <name type="scientific">Nitrosomonas europaea (strain ATCC 19718 / CIP 103999 / KCTC 2705 / NBRC 14298)</name>
    <dbReference type="NCBI Taxonomy" id="228410"/>
    <lineage>
        <taxon>Bacteria</taxon>
        <taxon>Pseudomonadati</taxon>
        <taxon>Pseudomonadota</taxon>
        <taxon>Betaproteobacteria</taxon>
        <taxon>Nitrosomonadales</taxon>
        <taxon>Nitrosomonadaceae</taxon>
        <taxon>Nitrosomonas</taxon>
    </lineage>
</organism>
<accession>Q82TU1</accession>